<proteinExistence type="inferred from homology"/>
<dbReference type="EC" id="2.7.8.13" evidence="1"/>
<dbReference type="EMBL" id="AM263198">
    <property type="protein sequence ID" value="CAK21469.1"/>
    <property type="molecule type" value="Genomic_DNA"/>
</dbReference>
<dbReference type="RefSeq" id="WP_011702814.1">
    <property type="nucleotide sequence ID" value="NC_008555.1"/>
</dbReference>
<dbReference type="SMR" id="A0AKD7"/>
<dbReference type="STRING" id="386043.lwe2051"/>
<dbReference type="GeneID" id="61189951"/>
<dbReference type="KEGG" id="lwe:lwe2051"/>
<dbReference type="eggNOG" id="COG0472">
    <property type="taxonomic scope" value="Bacteria"/>
</dbReference>
<dbReference type="HOGENOM" id="CLU_023982_0_1_9"/>
<dbReference type="OrthoDB" id="9805475at2"/>
<dbReference type="UniPathway" id="UPA00219"/>
<dbReference type="Proteomes" id="UP000000779">
    <property type="component" value="Chromosome"/>
</dbReference>
<dbReference type="GO" id="GO:0005886">
    <property type="term" value="C:plasma membrane"/>
    <property type="evidence" value="ECO:0007669"/>
    <property type="project" value="UniProtKB-SubCell"/>
</dbReference>
<dbReference type="GO" id="GO:0046872">
    <property type="term" value="F:metal ion binding"/>
    <property type="evidence" value="ECO:0007669"/>
    <property type="project" value="UniProtKB-KW"/>
</dbReference>
<dbReference type="GO" id="GO:0008963">
    <property type="term" value="F:phospho-N-acetylmuramoyl-pentapeptide-transferase activity"/>
    <property type="evidence" value="ECO:0007669"/>
    <property type="project" value="UniProtKB-UniRule"/>
</dbReference>
<dbReference type="GO" id="GO:0051992">
    <property type="term" value="F:UDP-N-acetylmuramoyl-L-alanyl-D-glutamyl-meso-2,6-diaminopimelyl-D-alanyl-D-alanine:undecaprenyl-phosphate transferase activity"/>
    <property type="evidence" value="ECO:0007669"/>
    <property type="project" value="RHEA"/>
</dbReference>
<dbReference type="GO" id="GO:0051301">
    <property type="term" value="P:cell division"/>
    <property type="evidence" value="ECO:0007669"/>
    <property type="project" value="UniProtKB-KW"/>
</dbReference>
<dbReference type="GO" id="GO:0071555">
    <property type="term" value="P:cell wall organization"/>
    <property type="evidence" value="ECO:0007669"/>
    <property type="project" value="UniProtKB-KW"/>
</dbReference>
<dbReference type="GO" id="GO:0009252">
    <property type="term" value="P:peptidoglycan biosynthetic process"/>
    <property type="evidence" value="ECO:0007669"/>
    <property type="project" value="UniProtKB-UniRule"/>
</dbReference>
<dbReference type="GO" id="GO:0008360">
    <property type="term" value="P:regulation of cell shape"/>
    <property type="evidence" value="ECO:0007669"/>
    <property type="project" value="UniProtKB-KW"/>
</dbReference>
<dbReference type="CDD" id="cd06852">
    <property type="entry name" value="GT_MraY"/>
    <property type="match status" value="1"/>
</dbReference>
<dbReference type="HAMAP" id="MF_00038">
    <property type="entry name" value="MraY"/>
    <property type="match status" value="1"/>
</dbReference>
<dbReference type="InterPro" id="IPR000715">
    <property type="entry name" value="Glycosyl_transferase_4"/>
</dbReference>
<dbReference type="InterPro" id="IPR003524">
    <property type="entry name" value="PNAcMuramoyl-5peptid_Trfase"/>
</dbReference>
<dbReference type="InterPro" id="IPR018480">
    <property type="entry name" value="PNAcMuramoyl-5peptid_Trfase_CS"/>
</dbReference>
<dbReference type="NCBIfam" id="TIGR00445">
    <property type="entry name" value="mraY"/>
    <property type="match status" value="1"/>
</dbReference>
<dbReference type="PANTHER" id="PTHR22926">
    <property type="entry name" value="PHOSPHO-N-ACETYLMURAMOYL-PENTAPEPTIDE-TRANSFERASE"/>
    <property type="match status" value="1"/>
</dbReference>
<dbReference type="PANTHER" id="PTHR22926:SF5">
    <property type="entry name" value="PHOSPHO-N-ACETYLMURAMOYL-PENTAPEPTIDE-TRANSFERASE HOMOLOG"/>
    <property type="match status" value="1"/>
</dbReference>
<dbReference type="Pfam" id="PF00953">
    <property type="entry name" value="Glycos_transf_4"/>
    <property type="match status" value="1"/>
</dbReference>
<dbReference type="PROSITE" id="PS01348">
    <property type="entry name" value="MRAY_2"/>
    <property type="match status" value="1"/>
</dbReference>
<protein>
    <recommendedName>
        <fullName evidence="1">Phospho-N-acetylmuramoyl-pentapeptide-transferase</fullName>
        <ecNumber evidence="1">2.7.8.13</ecNumber>
    </recommendedName>
    <alternativeName>
        <fullName evidence="1">UDP-MurNAc-pentapeptide phosphotransferase</fullName>
    </alternativeName>
</protein>
<organism>
    <name type="scientific">Listeria welshimeri serovar 6b (strain ATCC 35897 / DSM 20650 / CCUG 15529 / CIP 8149 / NCTC 11857 / SLCC 5334 / V8)</name>
    <dbReference type="NCBI Taxonomy" id="386043"/>
    <lineage>
        <taxon>Bacteria</taxon>
        <taxon>Bacillati</taxon>
        <taxon>Bacillota</taxon>
        <taxon>Bacilli</taxon>
        <taxon>Bacillales</taxon>
        <taxon>Listeriaceae</taxon>
        <taxon>Listeria</taxon>
    </lineage>
</organism>
<feature type="chain" id="PRO_1000003004" description="Phospho-N-acetylmuramoyl-pentapeptide-transferase">
    <location>
        <begin position="1"/>
        <end position="324"/>
    </location>
</feature>
<feature type="transmembrane region" description="Helical" evidence="1">
    <location>
        <begin position="9"/>
        <end position="29"/>
    </location>
</feature>
<feature type="transmembrane region" description="Helical" evidence="1">
    <location>
        <begin position="54"/>
        <end position="74"/>
    </location>
</feature>
<feature type="transmembrane region" description="Helical" evidence="1">
    <location>
        <begin position="77"/>
        <end position="97"/>
    </location>
</feature>
<feature type="transmembrane region" description="Helical" evidence="1">
    <location>
        <begin position="117"/>
        <end position="137"/>
    </location>
</feature>
<feature type="transmembrane region" description="Helical" evidence="1">
    <location>
        <begin position="147"/>
        <end position="167"/>
    </location>
</feature>
<feature type="transmembrane region" description="Helical" evidence="1">
    <location>
        <begin position="176"/>
        <end position="196"/>
    </location>
</feature>
<feature type="transmembrane region" description="Helical" evidence="1">
    <location>
        <begin position="201"/>
        <end position="221"/>
    </location>
</feature>
<feature type="transmembrane region" description="Helical" evidence="1">
    <location>
        <begin position="227"/>
        <end position="247"/>
    </location>
</feature>
<feature type="transmembrane region" description="Helical" evidence="1">
    <location>
        <begin position="253"/>
        <end position="273"/>
    </location>
</feature>
<feature type="transmembrane region" description="Helical" evidence="1">
    <location>
        <begin position="304"/>
        <end position="324"/>
    </location>
</feature>
<reference key="1">
    <citation type="journal article" date="2006" name="J. Bacteriol.">
        <title>Whole-genome sequence of Listeria welshimeri reveals common steps in genome reduction with Listeria innocua as compared to Listeria monocytogenes.</title>
        <authorList>
            <person name="Hain T."/>
            <person name="Steinweg C."/>
            <person name="Kuenne C.T."/>
            <person name="Billion A."/>
            <person name="Ghai R."/>
            <person name="Chatterjee S.S."/>
            <person name="Domann E."/>
            <person name="Kaerst U."/>
            <person name="Goesmann A."/>
            <person name="Bekel T."/>
            <person name="Bartels D."/>
            <person name="Kaiser O."/>
            <person name="Meyer F."/>
            <person name="Puehler A."/>
            <person name="Weisshaar B."/>
            <person name="Wehland J."/>
            <person name="Liang C."/>
            <person name="Dandekar T."/>
            <person name="Lampidis R."/>
            <person name="Kreft J."/>
            <person name="Goebel W."/>
            <person name="Chakraborty T."/>
        </authorList>
    </citation>
    <scope>NUCLEOTIDE SEQUENCE [LARGE SCALE GENOMIC DNA]</scope>
    <source>
        <strain>ATCC 35897 / DSM 20650 / CCUG 15529 / CIP 8149 / NCTC 11857 / SLCC 5334 / V8</strain>
    </source>
</reference>
<name>MRAY_LISW6</name>
<keyword id="KW-0131">Cell cycle</keyword>
<keyword id="KW-0132">Cell division</keyword>
<keyword id="KW-1003">Cell membrane</keyword>
<keyword id="KW-0133">Cell shape</keyword>
<keyword id="KW-0961">Cell wall biogenesis/degradation</keyword>
<keyword id="KW-0460">Magnesium</keyword>
<keyword id="KW-0472">Membrane</keyword>
<keyword id="KW-0479">Metal-binding</keyword>
<keyword id="KW-0573">Peptidoglycan synthesis</keyword>
<keyword id="KW-0808">Transferase</keyword>
<keyword id="KW-0812">Transmembrane</keyword>
<keyword id="KW-1133">Transmembrane helix</keyword>
<evidence type="ECO:0000255" key="1">
    <source>
        <dbReference type="HAMAP-Rule" id="MF_00038"/>
    </source>
</evidence>
<sequence length="324" mass="35740">MSLYMLVSTFAVAFIITVIGVPLFIPFLVKLKFGQSIRDEGPKMHEKKSGTPTMGAVVFITAMLISFLIFSFIGGEVSAATWLLFIALALFGALGFLDDYIKVVQKRNLGLTSKQKFLGQVAISILFYLVYHFSDFAETLNIPFTNIEVDLGWFFVIFILFWLVGFSNAVNLTDGLDGLVSGLSVIAFSAFGVIAFYQEQMDVAIFCFAIVGGMLGFLLFNKNPAKIFMGDTGSLALGGSIAAVSILVHQEWLLLLIGIIFVIETASVILQVFYFKATKGKRIFRMTPIHHHFELGGWSEWRVVLTFWGIGLVGAVISVCVVIF</sequence>
<gene>
    <name evidence="1" type="primary">mraY</name>
    <name type="ordered locus">lwe2051</name>
</gene>
<accession>A0AKD7</accession>
<comment type="function">
    <text evidence="1">Catalyzes the initial step of the lipid cycle reactions in the biosynthesis of the cell wall peptidoglycan: transfers peptidoglycan precursor phospho-MurNAc-pentapeptide from UDP-MurNAc-pentapeptide onto the lipid carrier undecaprenyl phosphate, yielding undecaprenyl-pyrophosphoryl-MurNAc-pentapeptide, known as lipid I.</text>
</comment>
<comment type="catalytic activity">
    <reaction evidence="1">
        <text>UDP-N-acetyl-alpha-D-muramoyl-L-alanyl-gamma-D-glutamyl-meso-2,6-diaminopimeloyl-D-alanyl-D-alanine + di-trans,octa-cis-undecaprenyl phosphate = di-trans,octa-cis-undecaprenyl diphospho-N-acetyl-alpha-D-muramoyl-L-alanyl-D-glutamyl-meso-2,6-diaminopimeloyl-D-alanyl-D-alanine + UMP</text>
        <dbReference type="Rhea" id="RHEA:28386"/>
        <dbReference type="ChEBI" id="CHEBI:57865"/>
        <dbReference type="ChEBI" id="CHEBI:60392"/>
        <dbReference type="ChEBI" id="CHEBI:61386"/>
        <dbReference type="ChEBI" id="CHEBI:61387"/>
        <dbReference type="EC" id="2.7.8.13"/>
    </reaction>
</comment>
<comment type="cofactor">
    <cofactor evidence="1">
        <name>Mg(2+)</name>
        <dbReference type="ChEBI" id="CHEBI:18420"/>
    </cofactor>
</comment>
<comment type="pathway">
    <text evidence="1">Cell wall biogenesis; peptidoglycan biosynthesis.</text>
</comment>
<comment type="subcellular location">
    <subcellularLocation>
        <location evidence="1">Cell membrane</location>
        <topology evidence="1">Multi-pass membrane protein</topology>
    </subcellularLocation>
</comment>
<comment type="similarity">
    <text evidence="1">Belongs to the glycosyltransferase 4 family. MraY subfamily.</text>
</comment>